<protein>
    <recommendedName>
        <fullName evidence="1">Ureidoglycolate lyase</fullName>
        <ecNumber evidence="1">4.3.2.3</ecNumber>
    </recommendedName>
    <alternativeName>
        <fullName evidence="1">Ureidoglycolatase</fullName>
    </alternativeName>
</protein>
<gene>
    <name evidence="1" type="primary">allA</name>
    <name type="ordered locus">PputGB1_3852</name>
</gene>
<comment type="function">
    <text evidence="1">Catalyzes the catabolism of the allantoin degradation intermediate (S)-ureidoglycolate, generating urea and glyoxylate. Involved in the utilization of allantoin as nitrogen source.</text>
</comment>
<comment type="catalytic activity">
    <reaction evidence="1">
        <text>(S)-ureidoglycolate = urea + glyoxylate</text>
        <dbReference type="Rhea" id="RHEA:11304"/>
        <dbReference type="ChEBI" id="CHEBI:16199"/>
        <dbReference type="ChEBI" id="CHEBI:36655"/>
        <dbReference type="ChEBI" id="CHEBI:57296"/>
        <dbReference type="EC" id="4.3.2.3"/>
    </reaction>
</comment>
<comment type="cofactor">
    <cofactor evidence="1">
        <name>Ni(2+)</name>
        <dbReference type="ChEBI" id="CHEBI:49786"/>
    </cofactor>
</comment>
<comment type="pathway">
    <text evidence="1">Nitrogen metabolism; (S)-allantoin degradation.</text>
</comment>
<comment type="subunit">
    <text evidence="1">Homodimer.</text>
</comment>
<comment type="similarity">
    <text evidence="1">Belongs to the ureidoglycolate lyase family.</text>
</comment>
<feature type="chain" id="PRO_1000082580" description="Ureidoglycolate lyase">
    <location>
        <begin position="1"/>
        <end position="167"/>
    </location>
</feature>
<reference key="1">
    <citation type="submission" date="2008-01" db="EMBL/GenBank/DDBJ databases">
        <title>Complete sequence of Pseudomonas putida GB-1.</title>
        <authorList>
            <consortium name="US DOE Joint Genome Institute"/>
            <person name="Copeland A."/>
            <person name="Lucas S."/>
            <person name="Lapidus A."/>
            <person name="Barry K."/>
            <person name="Glavina del Rio T."/>
            <person name="Dalin E."/>
            <person name="Tice H."/>
            <person name="Pitluck S."/>
            <person name="Bruce D."/>
            <person name="Goodwin L."/>
            <person name="Chertkov O."/>
            <person name="Brettin T."/>
            <person name="Detter J.C."/>
            <person name="Han C."/>
            <person name="Kuske C.R."/>
            <person name="Schmutz J."/>
            <person name="Larimer F."/>
            <person name="Land M."/>
            <person name="Hauser L."/>
            <person name="Kyrpides N."/>
            <person name="Kim E."/>
            <person name="McCarthy J.K."/>
            <person name="Richardson P."/>
        </authorList>
    </citation>
    <scope>NUCLEOTIDE SEQUENCE [LARGE SCALE GENOMIC DNA]</scope>
    <source>
        <strain>GB-1</strain>
    </source>
</reference>
<name>ALLA_PSEPG</name>
<sequence>MRTLMIEPLTKEAFAQFGDVIETDGSDHFMINNGSTMRFHKLATVETAEPEDKAIISIFRADAQDMPLTVRMLERHPLGSQAFIPLLGNPFLIVVAPVGDAPVSGLVRAFRSNGRQGVNYHRGVWHHPVLTIEKRDDFLVVDRSGSGNNCDEHYFTEEQMLILNPHQ</sequence>
<proteinExistence type="inferred from homology"/>
<accession>B0KPY7</accession>
<dbReference type="EC" id="4.3.2.3" evidence="1"/>
<dbReference type="EMBL" id="CP000926">
    <property type="protein sequence ID" value="ABY99742.1"/>
    <property type="molecule type" value="Genomic_DNA"/>
</dbReference>
<dbReference type="RefSeq" id="WP_003254333.1">
    <property type="nucleotide sequence ID" value="NC_010322.1"/>
</dbReference>
<dbReference type="SMR" id="B0KPY7"/>
<dbReference type="KEGG" id="ppg:PputGB1_3852"/>
<dbReference type="eggNOG" id="COG3194">
    <property type="taxonomic scope" value="Bacteria"/>
</dbReference>
<dbReference type="HOGENOM" id="CLU_070848_1_0_6"/>
<dbReference type="UniPathway" id="UPA00395"/>
<dbReference type="Proteomes" id="UP000002157">
    <property type="component" value="Chromosome"/>
</dbReference>
<dbReference type="GO" id="GO:0004848">
    <property type="term" value="F:ureidoglycolate hydrolase activity"/>
    <property type="evidence" value="ECO:0007669"/>
    <property type="project" value="InterPro"/>
</dbReference>
<dbReference type="GO" id="GO:0050385">
    <property type="term" value="F:ureidoglycolate lyase activity"/>
    <property type="evidence" value="ECO:0007669"/>
    <property type="project" value="UniProtKB-UniRule"/>
</dbReference>
<dbReference type="GO" id="GO:0000256">
    <property type="term" value="P:allantoin catabolic process"/>
    <property type="evidence" value="ECO:0007669"/>
    <property type="project" value="UniProtKB-UniRule"/>
</dbReference>
<dbReference type="GO" id="GO:0006145">
    <property type="term" value="P:purine nucleobase catabolic process"/>
    <property type="evidence" value="ECO:0007669"/>
    <property type="project" value="UniProtKB-UniRule"/>
</dbReference>
<dbReference type="CDD" id="cd20298">
    <property type="entry name" value="cupin_UAH"/>
    <property type="match status" value="1"/>
</dbReference>
<dbReference type="Gene3D" id="2.60.120.480">
    <property type="entry name" value="Ureidoglycolate hydrolase"/>
    <property type="match status" value="1"/>
</dbReference>
<dbReference type="HAMAP" id="MF_00616">
    <property type="entry name" value="Ureidogly_lyase"/>
    <property type="match status" value="1"/>
</dbReference>
<dbReference type="InterPro" id="IPR011051">
    <property type="entry name" value="RmlC_Cupin_sf"/>
</dbReference>
<dbReference type="InterPro" id="IPR047233">
    <property type="entry name" value="UAH_cupin"/>
</dbReference>
<dbReference type="InterPro" id="IPR007247">
    <property type="entry name" value="Ureidogly_lyase"/>
</dbReference>
<dbReference type="InterPro" id="IPR023525">
    <property type="entry name" value="Ureidogly_lyase_bac"/>
</dbReference>
<dbReference type="InterPro" id="IPR024060">
    <property type="entry name" value="Ureidoglycolate_lyase_dom_sf"/>
</dbReference>
<dbReference type="NCBIfam" id="NF002949">
    <property type="entry name" value="PRK03606.1-2"/>
    <property type="match status" value="1"/>
</dbReference>
<dbReference type="NCBIfam" id="NF009932">
    <property type="entry name" value="PRK13395.1"/>
    <property type="match status" value="1"/>
</dbReference>
<dbReference type="PANTHER" id="PTHR21221">
    <property type="entry name" value="UREIDOGLYCOLATE HYDROLASE"/>
    <property type="match status" value="1"/>
</dbReference>
<dbReference type="PANTHER" id="PTHR21221:SF1">
    <property type="entry name" value="UREIDOGLYCOLATE LYASE"/>
    <property type="match status" value="1"/>
</dbReference>
<dbReference type="Pfam" id="PF04115">
    <property type="entry name" value="Ureidogly_lyase"/>
    <property type="match status" value="1"/>
</dbReference>
<dbReference type="PIRSF" id="PIRSF017306">
    <property type="entry name" value="Ureidogly_hydro"/>
    <property type="match status" value="1"/>
</dbReference>
<dbReference type="SUPFAM" id="SSF51182">
    <property type="entry name" value="RmlC-like cupins"/>
    <property type="match status" value="1"/>
</dbReference>
<keyword id="KW-0456">Lyase</keyword>
<keyword id="KW-0659">Purine metabolism</keyword>
<organism>
    <name type="scientific">Pseudomonas putida (strain GB-1)</name>
    <dbReference type="NCBI Taxonomy" id="76869"/>
    <lineage>
        <taxon>Bacteria</taxon>
        <taxon>Pseudomonadati</taxon>
        <taxon>Pseudomonadota</taxon>
        <taxon>Gammaproteobacteria</taxon>
        <taxon>Pseudomonadales</taxon>
        <taxon>Pseudomonadaceae</taxon>
        <taxon>Pseudomonas</taxon>
    </lineage>
</organism>
<evidence type="ECO:0000255" key="1">
    <source>
        <dbReference type="HAMAP-Rule" id="MF_00616"/>
    </source>
</evidence>